<keyword id="KW-1185">Reference proteome</keyword>
<keyword id="KW-0687">Ribonucleoprotein</keyword>
<keyword id="KW-0689">Ribosomal protein</keyword>
<keyword id="KW-0694">RNA-binding</keyword>
<keyword id="KW-0699">rRNA-binding</keyword>
<reference key="1">
    <citation type="journal article" date="2010" name="J. Bacteriol.">
        <title>The genome of the amoeba symbiont 'Candidatus Amoebophilus asiaticus' reveals common mechanisms for host cell interaction among amoeba-associated bacteria.</title>
        <authorList>
            <person name="Schmitz-Esser S."/>
            <person name="Tischler P."/>
            <person name="Arnold R."/>
            <person name="Montanaro J."/>
            <person name="Wagner M."/>
            <person name="Rattei T."/>
            <person name="Horn M."/>
        </authorList>
    </citation>
    <scope>NUCLEOTIDE SEQUENCE [LARGE SCALE GENOMIC DNA]</scope>
    <source>
        <strain>5a2</strain>
    </source>
</reference>
<protein>
    <recommendedName>
        <fullName evidence="1">Large ribosomal subunit protein uL10</fullName>
    </recommendedName>
    <alternativeName>
        <fullName evidence="2">50S ribosomal protein L10</fullName>
    </alternativeName>
</protein>
<comment type="function">
    <text evidence="1">Forms part of the ribosomal stalk, playing a central role in the interaction of the ribosome with GTP-bound translation factors.</text>
</comment>
<comment type="subunit">
    <text evidence="1">Part of the ribosomal stalk of the 50S ribosomal subunit. The N-terminus interacts with L11 and the large rRNA to form the base of the stalk. The C-terminus forms an elongated spine to which L12 dimers bind in a sequential fashion forming a multimeric L10(L12)X complex.</text>
</comment>
<comment type="similarity">
    <text evidence="1">Belongs to the universal ribosomal protein uL10 family.</text>
</comment>
<name>RL10_AMOA5</name>
<gene>
    <name evidence="1" type="primary">rplJ</name>
    <name type="ordered locus">Aasi_1398</name>
</gene>
<evidence type="ECO:0000255" key="1">
    <source>
        <dbReference type="HAMAP-Rule" id="MF_00362"/>
    </source>
</evidence>
<evidence type="ECO:0000305" key="2"/>
<dbReference type="EMBL" id="CP001102">
    <property type="protein sequence ID" value="ACE06694.1"/>
    <property type="molecule type" value="Genomic_DNA"/>
</dbReference>
<dbReference type="RefSeq" id="WP_012473436.1">
    <property type="nucleotide sequence ID" value="NC_010830.1"/>
</dbReference>
<dbReference type="SMR" id="B3ETZ2"/>
<dbReference type="STRING" id="452471.Aasi_1398"/>
<dbReference type="KEGG" id="aas:Aasi_1398"/>
<dbReference type="eggNOG" id="COG0244">
    <property type="taxonomic scope" value="Bacteria"/>
</dbReference>
<dbReference type="HOGENOM" id="CLU_092227_3_0_10"/>
<dbReference type="OrthoDB" id="1523686at2"/>
<dbReference type="Proteomes" id="UP000001227">
    <property type="component" value="Chromosome"/>
</dbReference>
<dbReference type="GO" id="GO:1990904">
    <property type="term" value="C:ribonucleoprotein complex"/>
    <property type="evidence" value="ECO:0007669"/>
    <property type="project" value="UniProtKB-KW"/>
</dbReference>
<dbReference type="GO" id="GO:0005840">
    <property type="term" value="C:ribosome"/>
    <property type="evidence" value="ECO:0007669"/>
    <property type="project" value="UniProtKB-KW"/>
</dbReference>
<dbReference type="GO" id="GO:0070180">
    <property type="term" value="F:large ribosomal subunit rRNA binding"/>
    <property type="evidence" value="ECO:0007669"/>
    <property type="project" value="UniProtKB-UniRule"/>
</dbReference>
<dbReference type="GO" id="GO:0006412">
    <property type="term" value="P:translation"/>
    <property type="evidence" value="ECO:0007669"/>
    <property type="project" value="UniProtKB-UniRule"/>
</dbReference>
<dbReference type="CDD" id="cd05797">
    <property type="entry name" value="Ribosomal_L10"/>
    <property type="match status" value="1"/>
</dbReference>
<dbReference type="Gene3D" id="3.30.70.1730">
    <property type="match status" value="1"/>
</dbReference>
<dbReference type="HAMAP" id="MF_00362">
    <property type="entry name" value="Ribosomal_uL10"/>
    <property type="match status" value="1"/>
</dbReference>
<dbReference type="InterPro" id="IPR001790">
    <property type="entry name" value="Ribosomal_uL10"/>
</dbReference>
<dbReference type="InterPro" id="IPR043141">
    <property type="entry name" value="Ribosomal_uL10-like_sf"/>
</dbReference>
<dbReference type="InterPro" id="IPR022973">
    <property type="entry name" value="Ribosomal_uL10_bac"/>
</dbReference>
<dbReference type="InterPro" id="IPR047865">
    <property type="entry name" value="Ribosomal_uL10_bac_type"/>
</dbReference>
<dbReference type="NCBIfam" id="NF000955">
    <property type="entry name" value="PRK00099.1-1"/>
    <property type="match status" value="1"/>
</dbReference>
<dbReference type="PANTHER" id="PTHR11560">
    <property type="entry name" value="39S RIBOSOMAL PROTEIN L10, MITOCHONDRIAL"/>
    <property type="match status" value="1"/>
</dbReference>
<dbReference type="Pfam" id="PF00466">
    <property type="entry name" value="Ribosomal_L10"/>
    <property type="match status" value="1"/>
</dbReference>
<dbReference type="SUPFAM" id="SSF160369">
    <property type="entry name" value="Ribosomal protein L10-like"/>
    <property type="match status" value="1"/>
</dbReference>
<proteinExistence type="inferred from homology"/>
<sequence>MNRKEKTAIIQQLTESFKSHDCFYIVDSTKLSVQATNQFRRDCHQAGVTYKVAKNTLILKALDEVPHMASDVYTSLRDEVLKGFSGILFFNETASVPAKLVKEFRKQKNLDRPILKGAYIDGELFVGDENLEALSQLKSKQVLIGEIITLLQSPMANVLSALQSGKNQLSGIIKTLGDRSE</sequence>
<accession>B3ETZ2</accession>
<feature type="chain" id="PRO_1000120911" description="Large ribosomal subunit protein uL10">
    <location>
        <begin position="1"/>
        <end position="181"/>
    </location>
</feature>
<organism>
    <name type="scientific">Amoebophilus asiaticus (strain 5a2)</name>
    <dbReference type="NCBI Taxonomy" id="452471"/>
    <lineage>
        <taxon>Bacteria</taxon>
        <taxon>Pseudomonadati</taxon>
        <taxon>Bacteroidota</taxon>
        <taxon>Cytophagia</taxon>
        <taxon>Cytophagales</taxon>
        <taxon>Amoebophilaceae</taxon>
        <taxon>Candidatus Amoebophilus</taxon>
    </lineage>
</organism>